<name>CLCA_ECOHS</name>
<evidence type="ECO:0000255" key="1">
    <source>
        <dbReference type="HAMAP-Rule" id="MF_01128"/>
    </source>
</evidence>
<organism>
    <name type="scientific">Escherichia coli O9:H4 (strain HS)</name>
    <dbReference type="NCBI Taxonomy" id="331112"/>
    <lineage>
        <taxon>Bacteria</taxon>
        <taxon>Pseudomonadati</taxon>
        <taxon>Pseudomonadota</taxon>
        <taxon>Gammaproteobacteria</taxon>
        <taxon>Enterobacterales</taxon>
        <taxon>Enterobacteriaceae</taxon>
        <taxon>Escherichia</taxon>
    </lineage>
</organism>
<reference key="1">
    <citation type="journal article" date="2008" name="J. Bacteriol.">
        <title>The pangenome structure of Escherichia coli: comparative genomic analysis of E. coli commensal and pathogenic isolates.</title>
        <authorList>
            <person name="Rasko D.A."/>
            <person name="Rosovitz M.J."/>
            <person name="Myers G.S.A."/>
            <person name="Mongodin E.F."/>
            <person name="Fricke W.F."/>
            <person name="Gajer P."/>
            <person name="Crabtree J."/>
            <person name="Sebaihia M."/>
            <person name="Thomson N.R."/>
            <person name="Chaudhuri R."/>
            <person name="Henderson I.R."/>
            <person name="Sperandio V."/>
            <person name="Ravel J."/>
        </authorList>
    </citation>
    <scope>NUCLEOTIDE SEQUENCE [LARGE SCALE GENOMIC DNA]</scope>
    <source>
        <strain>HS</strain>
    </source>
</reference>
<keyword id="KW-0050">Antiport</keyword>
<keyword id="KW-0997">Cell inner membrane</keyword>
<keyword id="KW-1003">Cell membrane</keyword>
<keyword id="KW-0868">Chloride</keyword>
<keyword id="KW-0406">Ion transport</keyword>
<keyword id="KW-0472">Membrane</keyword>
<keyword id="KW-0812">Transmembrane</keyword>
<keyword id="KW-1133">Transmembrane helix</keyword>
<keyword id="KW-0813">Transport</keyword>
<proteinExistence type="inferred from homology"/>
<gene>
    <name evidence="1" type="primary">clcA</name>
    <name evidence="1" type="synonym">eriC</name>
    <name type="ordered locus">EcHS_A0159</name>
</gene>
<dbReference type="EMBL" id="CP000802">
    <property type="protein sequence ID" value="ABV04557.1"/>
    <property type="molecule type" value="Genomic_DNA"/>
</dbReference>
<dbReference type="RefSeq" id="WP_000845389.1">
    <property type="nucleotide sequence ID" value="NC_009800.1"/>
</dbReference>
<dbReference type="SMR" id="A7ZWA3"/>
<dbReference type="KEGG" id="ecx:EcHS_A0159"/>
<dbReference type="HOGENOM" id="CLU_015263_7_0_6"/>
<dbReference type="GO" id="GO:0005886">
    <property type="term" value="C:plasma membrane"/>
    <property type="evidence" value="ECO:0007669"/>
    <property type="project" value="UniProtKB-SubCell"/>
</dbReference>
<dbReference type="GO" id="GO:0015297">
    <property type="term" value="F:antiporter activity"/>
    <property type="evidence" value="ECO:0007669"/>
    <property type="project" value="UniProtKB-UniRule"/>
</dbReference>
<dbReference type="GO" id="GO:0005247">
    <property type="term" value="F:voltage-gated chloride channel activity"/>
    <property type="evidence" value="ECO:0007669"/>
    <property type="project" value="TreeGrafter"/>
</dbReference>
<dbReference type="CDD" id="cd01031">
    <property type="entry name" value="EriC"/>
    <property type="match status" value="1"/>
</dbReference>
<dbReference type="FunFam" id="1.10.3080.10:FF:000005">
    <property type="entry name" value="H(+)/Cl(-) exchange transporter ClcA"/>
    <property type="match status" value="1"/>
</dbReference>
<dbReference type="Gene3D" id="1.10.3080.10">
    <property type="entry name" value="Clc chloride channel"/>
    <property type="match status" value="1"/>
</dbReference>
<dbReference type="HAMAP" id="MF_01128">
    <property type="entry name" value="CLC_ClcA"/>
    <property type="match status" value="1"/>
</dbReference>
<dbReference type="InterPro" id="IPR023861">
    <property type="entry name" value="Cl-channel_ClcA"/>
</dbReference>
<dbReference type="InterPro" id="IPR014743">
    <property type="entry name" value="Cl-channel_core"/>
</dbReference>
<dbReference type="InterPro" id="IPR001807">
    <property type="entry name" value="ClC"/>
</dbReference>
<dbReference type="NCBIfam" id="NF003640">
    <property type="entry name" value="PRK05277.1"/>
    <property type="match status" value="1"/>
</dbReference>
<dbReference type="PANTHER" id="PTHR45711">
    <property type="entry name" value="CHLORIDE CHANNEL PROTEIN"/>
    <property type="match status" value="1"/>
</dbReference>
<dbReference type="PANTHER" id="PTHR45711:SF6">
    <property type="entry name" value="CHLORIDE CHANNEL PROTEIN"/>
    <property type="match status" value="1"/>
</dbReference>
<dbReference type="Pfam" id="PF00654">
    <property type="entry name" value="Voltage_CLC"/>
    <property type="match status" value="1"/>
</dbReference>
<dbReference type="PRINTS" id="PR00762">
    <property type="entry name" value="CLCHANNEL"/>
</dbReference>
<dbReference type="SUPFAM" id="SSF81340">
    <property type="entry name" value="Clc chloride channel"/>
    <property type="match status" value="1"/>
</dbReference>
<accession>A7ZWA3</accession>
<comment type="function">
    <text evidence="1">Proton-coupled chloride transporter. Functions as antiport system and exchanges two chloride ions for 1 proton. Probably acts as an electrical shunt for an outwardly-directed proton pump that is linked to amino acid decarboxylation, as part of the extreme acid resistance (XAR) response.</text>
</comment>
<comment type="catalytic activity">
    <reaction evidence="1">
        <text>2 chloride(in) + H(+)(out) = 2 chloride(out) + H(+)(in)</text>
        <dbReference type="Rhea" id="RHEA:29567"/>
        <dbReference type="ChEBI" id="CHEBI:15378"/>
        <dbReference type="ChEBI" id="CHEBI:17996"/>
    </reaction>
</comment>
<comment type="subunit">
    <text evidence="1">Homodimer.</text>
</comment>
<comment type="subcellular location">
    <subcellularLocation>
        <location evidence="1">Cell inner membrane</location>
        <topology evidence="1">Multi-pass membrane protein</topology>
    </subcellularLocation>
</comment>
<comment type="similarity">
    <text evidence="1">Belongs to the chloride channel (TC 2.A.49) family. ClcA subfamily.</text>
</comment>
<protein>
    <recommendedName>
        <fullName evidence="1">H(+)/Cl(-) exchange transporter ClcA</fullName>
    </recommendedName>
</protein>
<sequence length="473" mass="50363">MKTDTPSLETPQAARLRRRQLIRQLLERDKTPLAILFMAAVVGTLVGLAAVAFDKGVAWLQNQRMGALVHTADNYPLLLTVAFLCSAVLAMFGYFLVRKYAPEAGGSGIPEIEGALEDQRPVRWWRVLPVKFFGGLGTLGGGMVLGREGPTVQIGGNIGRMVLDIFRLKGDEARHTLLATGAAAGLAAAFNAPLAGILFIIEEMRPQFRYTLISIKAVFIGVIMSTIMYRIFNHEVALIDVGKLSDAPLNTLWLYLILGIIFGIFGPIFNKWVLGMQDLLHRVHGGNITKWILMGGAIGGLCGLLGFVAPATSGGGFNLIPIATAGNFSMGMLVFIFVARVITTLLCFSSGAPGGIFAPMLALGTVLGTAFGMVAVELFPQYHLEAGTFAIAGMGALLAASIRAPLTGIILVLEMTDNYQLILPMIITGLGATLLAQFTGGKPLYSAILARTLAKQEAEQLARSKAASASENT</sequence>
<feature type="chain" id="PRO_1000065378" description="H(+)/Cl(-) exchange transporter ClcA">
    <location>
        <begin position="1"/>
        <end position="473"/>
    </location>
</feature>
<feature type="topological domain" description="Cytoplasmic" evidence="1">
    <location>
        <begin position="1"/>
        <end position="32"/>
    </location>
</feature>
<feature type="transmembrane region" description="Helical" evidence="1">
    <location>
        <begin position="33"/>
        <end position="69"/>
    </location>
</feature>
<feature type="topological domain" description="Periplasmic" evidence="1">
    <location>
        <begin position="70"/>
        <end position="76"/>
    </location>
</feature>
<feature type="transmembrane region" description="Helical" evidence="1">
    <location>
        <begin position="77"/>
        <end position="100"/>
    </location>
</feature>
<feature type="intramembrane region" description="Helical" evidence="1">
    <location>
        <begin position="109"/>
        <end position="116"/>
    </location>
</feature>
<feature type="topological domain" description="Cytoplasmic" evidence="1">
    <location>
        <begin position="117"/>
        <end position="123"/>
    </location>
</feature>
<feature type="transmembrane region" description="Helical" evidence="1">
    <location>
        <begin position="124"/>
        <end position="141"/>
    </location>
</feature>
<feature type="transmembrane region" description="Helical" evidence="1">
    <location>
        <begin position="148"/>
        <end position="166"/>
    </location>
</feature>
<feature type="topological domain" description="Cytoplasmic" evidence="1">
    <location>
        <begin position="167"/>
        <end position="176"/>
    </location>
</feature>
<feature type="intramembrane region" description="Helical" evidence="1">
    <location>
        <begin position="177"/>
        <end position="189"/>
    </location>
</feature>
<feature type="intramembrane region" description="Helical" evidence="1">
    <location>
        <begin position="193"/>
        <end position="201"/>
    </location>
</feature>
<feature type="topological domain" description="Cytoplasmic" evidence="1">
    <location>
        <begin position="202"/>
        <end position="214"/>
    </location>
</feature>
<feature type="transmembrane region" description="Helical" evidence="1">
    <location>
        <begin position="215"/>
        <end position="232"/>
    </location>
</feature>
<feature type="topological domain" description="Periplasmic" evidence="1">
    <location>
        <begin position="233"/>
        <end position="252"/>
    </location>
</feature>
<feature type="transmembrane region" description="Helical" evidence="1">
    <location>
        <begin position="253"/>
        <end position="281"/>
    </location>
</feature>
<feature type="topological domain" description="Cytoplasmic" evidence="1">
    <location>
        <begin position="282"/>
        <end position="287"/>
    </location>
</feature>
<feature type="transmembrane region" description="Helical" evidence="1">
    <location>
        <begin position="288"/>
        <end position="309"/>
    </location>
</feature>
<feature type="topological domain" description="Periplasmic" evidence="1">
    <location>
        <begin position="310"/>
        <end position="329"/>
    </location>
</feature>
<feature type="transmembrane region" description="Helical" evidence="1">
    <location>
        <begin position="330"/>
        <end position="349"/>
    </location>
</feature>
<feature type="transmembrane region" description="Helical" evidence="1">
    <location>
        <begin position="355"/>
        <end position="376"/>
    </location>
</feature>
<feature type="topological domain" description="Periplasmic" evidence="1">
    <location>
        <begin position="377"/>
        <end position="386"/>
    </location>
</feature>
<feature type="intramembrane region" description="Helical" evidence="1">
    <location>
        <begin position="387"/>
        <end position="401"/>
    </location>
</feature>
<feature type="intramembrane region" description="Note=Loop between two helices" evidence="1">
    <location>
        <begin position="402"/>
        <end position="404"/>
    </location>
</feature>
<feature type="intramembrane region" description="Helical" evidence="1">
    <location>
        <begin position="405"/>
        <end position="416"/>
    </location>
</feature>
<feature type="intramembrane region" description="Note=Loop between two helices" evidence="1">
    <location>
        <begin position="417"/>
        <end position="421"/>
    </location>
</feature>
<feature type="transmembrane region" description="Helical" evidence="1">
    <location>
        <begin position="422"/>
        <end position="438"/>
    </location>
</feature>
<feature type="topological domain" description="Cytoplasmic" evidence="1">
    <location>
        <begin position="439"/>
        <end position="473"/>
    </location>
</feature>
<feature type="short sequence motif" description="Selectivity filter part_1" evidence="1">
    <location>
        <begin position="106"/>
        <end position="110"/>
    </location>
</feature>
<feature type="short sequence motif" description="Selectivity filter part_2" evidence="1">
    <location>
        <begin position="146"/>
        <end position="150"/>
    </location>
</feature>
<feature type="short sequence motif" description="Selectivity filter part_3" evidence="1">
    <location>
        <begin position="355"/>
        <end position="359"/>
    </location>
</feature>
<feature type="binding site" evidence="1">
    <location>
        <position position="107"/>
    </location>
    <ligand>
        <name>chloride</name>
        <dbReference type="ChEBI" id="CHEBI:17996"/>
    </ligand>
</feature>
<feature type="binding site" evidence="1">
    <location>
        <position position="356"/>
    </location>
    <ligand>
        <name>chloride</name>
        <dbReference type="ChEBI" id="CHEBI:17996"/>
    </ligand>
</feature>
<feature type="binding site" evidence="1">
    <location>
        <position position="357"/>
    </location>
    <ligand>
        <name>chloride</name>
        <dbReference type="ChEBI" id="CHEBI:17996"/>
    </ligand>
</feature>
<feature type="binding site" evidence="1">
    <location>
        <position position="445"/>
    </location>
    <ligand>
        <name>chloride</name>
        <dbReference type="ChEBI" id="CHEBI:17996"/>
    </ligand>
</feature>
<feature type="site" description="Mediates proton transfer from the outer aqueous phase to the interior of the protein; involved in linking H(+) and Cl(-) transport" evidence="1">
    <location>
        <position position="148"/>
    </location>
</feature>
<feature type="site" description="Mediates proton transfer from the protein to the inner aqueous phase" evidence="1">
    <location>
        <position position="203"/>
    </location>
</feature>